<sequence length="590" mass="67619">MSSACDAGDHYPLHLLVWKNDYRQLEKELQGQNVEAVDPRGRTLLHLAVSLGHLESARVLLRHKADVTKENRQGWTVLHEAVSTGDPEMVYTVLQHRDYHNTSMALEGVPELLQKILEAPDFYVQMKWEFTSWVPLVSRICPNDVCRIWKSGAKLRVDITLLGFENMSWIRGRRSFIFKGEDNWAELMEVNHDDKVVTTERFDLSQEMERLTLDLMKPKSREVERRLTSPVINTSLDTKNIAFERTKSGFWGWRTDKAEVVNGYEAKVYTVNNVNVITKIRTEHLTEEEKKRYKADRNPLESLLGTVEHQFGAQGDLTTECATANNPTAITPDEYFNEEFDLKDRDIGRPKELTIRTQKFKAMLWMCEEFPLSLVEQVIPIIDLMARTSAHFARLRDFIKLEFPPGFPVKIEIPLFHVLNARITFGNVNGCSTAEESVSQNVEGTQADSASHITNFEVDQSVFEIPESYYVQDNGRNVHLQDEDYEIMQFAIQQSLLESSRSQELSGPASNGGISQTNTYDAQYERAIQESLLTSTEGLCPSALSETSRFDNDLQLAMELSAKELEEWELRLQEEEAELQQVLQLSLTDK</sequence>
<gene>
    <name type="primary">ANKRD13A</name>
    <name type="synonym">ANKRD13</name>
</gene>
<evidence type="ECO:0000250" key="1">
    <source>
        <dbReference type="UniProtKB" id="Q80UP5"/>
    </source>
</evidence>
<evidence type="ECO:0000255" key="2">
    <source>
        <dbReference type="PROSITE-ProRule" id="PRU00213"/>
    </source>
</evidence>
<evidence type="ECO:0000269" key="3">
    <source>
    </source>
</evidence>
<evidence type="ECO:0000305" key="4"/>
<evidence type="ECO:0007744" key="5">
    <source>
    </source>
</evidence>
<reference key="1">
    <citation type="journal article" date="2004" name="Genome Res.">
        <title>The status, quality, and expansion of the NIH full-length cDNA project: the Mammalian Gene Collection (MGC).</title>
        <authorList>
            <consortium name="The MGC Project Team"/>
        </authorList>
    </citation>
    <scope>NUCLEOTIDE SEQUENCE [LARGE SCALE MRNA]</scope>
    <source>
        <tissue>Testis</tissue>
    </source>
</reference>
<reference key="2">
    <citation type="submission" date="1998-05" db="EMBL/GenBank/DDBJ databases">
        <title>A novel gene from human dendritic cells.</title>
        <authorList>
            <person name="Zhao Z."/>
            <person name="Huang X."/>
            <person name="Li N."/>
            <person name="Zhu X."/>
            <person name="Cao X."/>
        </authorList>
    </citation>
    <scope>NUCLEOTIDE SEQUENCE [MRNA] OF 1-353</scope>
    <source>
        <tissue>Blood</tissue>
    </source>
</reference>
<reference key="3">
    <citation type="journal article" date="2011" name="BMC Syst. Biol.">
        <title>Initial characterization of the human central proteome.</title>
        <authorList>
            <person name="Burkard T.R."/>
            <person name="Planyavsky M."/>
            <person name="Kaupe I."/>
            <person name="Breitwieser F.P."/>
            <person name="Buerckstuemmer T."/>
            <person name="Bennett K.L."/>
            <person name="Superti-Furga G."/>
            <person name="Colinge J."/>
        </authorList>
    </citation>
    <scope>IDENTIFICATION BY MASS SPECTROMETRY [LARGE SCALE ANALYSIS]</scope>
</reference>
<reference key="4">
    <citation type="journal article" date="2012" name="Mol. Biol. Cell">
        <title>The Ankrd 13 family of UIM-bearing proteins regulates EGF receptor endocytosis from the plasma membrane.</title>
        <authorList>
            <person name="Tanno H."/>
            <person name="Yamaguchi T."/>
            <person name="Goto E."/>
            <person name="Ishido S."/>
            <person name="Komada M."/>
        </authorList>
    </citation>
    <scope>FUNCTION</scope>
    <scope>INTERACTION WITH EGFR</scope>
    <scope>UBIQUITINATION</scope>
    <scope>UIM DOMAIN</scope>
    <scope>UBIQUITIN-BINDING</scope>
    <scope>SUBCELLULAR LOCATION</scope>
    <scope>MUTAGENESIS OF 491-ALA--SER-495; 527-ALA--SER-531; 557-ALA--SER-561 AND 582-VAL--SER-586</scope>
</reference>
<reference key="5">
    <citation type="journal article" date="2014" name="J. Proteomics">
        <title>An enzyme assisted RP-RPLC approach for in-depth analysis of human liver phosphoproteome.</title>
        <authorList>
            <person name="Bian Y."/>
            <person name="Song C."/>
            <person name="Cheng K."/>
            <person name="Dong M."/>
            <person name="Wang F."/>
            <person name="Huang J."/>
            <person name="Sun D."/>
            <person name="Wang L."/>
            <person name="Ye M."/>
            <person name="Zou H."/>
        </authorList>
    </citation>
    <scope>PHOSPHORYLATION [LARGE SCALE ANALYSIS] AT SER-586</scope>
    <scope>IDENTIFICATION BY MASS SPECTROMETRY [LARGE SCALE ANALYSIS]</scope>
    <source>
        <tissue>Liver</tissue>
    </source>
</reference>
<comment type="function">
    <text evidence="3">Ubiquitin-binding protein that specifically recognizes and binds 'Lys-63'-linked ubiquitin. Does not bind 'Lys-48'-linked ubiquitin. Positively regulates the internalization of ligand-activated EGFR by binding to the Ub moiety of ubiquitinated EGFR at the cell membrane.</text>
</comment>
<comment type="subunit">
    <text evidence="3">Interacts (via the UIM 3 and 4 repeats) with EGFR (ubiquitinated); the interaction is direct, inhibited by ANKRD13A monoubiquitination and may regulate EGFR internalization.</text>
</comment>
<comment type="subcellular location">
    <subcellularLocation>
        <location evidence="3">Cell membrane</location>
    </subcellularLocation>
    <subcellularLocation>
        <location evidence="3">Late endosome</location>
    </subcellularLocation>
    <text>Interaction with EGFR may enhance association with the cell membrane.</text>
</comment>
<comment type="domain">
    <text>The UIM repeats 3 and 4 are required for binding to ubiquitinated EGFR and 'Lys-63'-linked ubiquitin.</text>
</comment>
<comment type="PTM">
    <text evidence="3">Monoubiquitinated, inhibits interaction with ubiquitinated EGFR.</text>
</comment>
<comment type="sequence caution" evidence="4">
    <conflict type="frameshift">
        <sequence resource="EMBL-CDS" id="AAC17109"/>
    </conflict>
</comment>
<name>AN13A_HUMAN</name>
<protein>
    <recommendedName>
        <fullName>Ankyrin repeat domain-containing protein 13A</fullName>
    </recommendedName>
    <alternativeName>
        <fullName>Protein KE03</fullName>
    </alternativeName>
</protein>
<organism>
    <name type="scientific">Homo sapiens</name>
    <name type="common">Human</name>
    <dbReference type="NCBI Taxonomy" id="9606"/>
    <lineage>
        <taxon>Eukaryota</taxon>
        <taxon>Metazoa</taxon>
        <taxon>Chordata</taxon>
        <taxon>Craniata</taxon>
        <taxon>Vertebrata</taxon>
        <taxon>Euteleostomi</taxon>
        <taxon>Mammalia</taxon>
        <taxon>Eutheria</taxon>
        <taxon>Euarchontoglires</taxon>
        <taxon>Primates</taxon>
        <taxon>Haplorrhini</taxon>
        <taxon>Catarrhini</taxon>
        <taxon>Hominidae</taxon>
        <taxon>Homo</taxon>
    </lineage>
</organism>
<keyword id="KW-0040">ANK repeat</keyword>
<keyword id="KW-1003">Cell membrane</keyword>
<keyword id="KW-0967">Endosome</keyword>
<keyword id="KW-0472">Membrane</keyword>
<keyword id="KW-0597">Phosphoprotein</keyword>
<keyword id="KW-1267">Proteomics identification</keyword>
<keyword id="KW-1185">Reference proteome</keyword>
<keyword id="KW-0677">Repeat</keyword>
<keyword id="KW-0832">Ubl conjugation</keyword>
<proteinExistence type="evidence at protein level"/>
<accession>Q8IZ07</accession>
<accession>O60736</accession>
<feature type="chain" id="PRO_0000066909" description="Ankyrin repeat domain-containing protein 13A">
    <location>
        <begin position="1"/>
        <end position="590"/>
    </location>
</feature>
<feature type="repeat" description="ANK 1">
    <location>
        <begin position="40"/>
        <end position="69"/>
    </location>
</feature>
<feature type="repeat" description="ANK 2">
    <location>
        <begin position="73"/>
        <end position="102"/>
    </location>
</feature>
<feature type="domain" description="UIM 1" evidence="2">
    <location>
        <begin position="483"/>
        <end position="502"/>
    </location>
</feature>
<feature type="domain" description="UIM 2" evidence="2">
    <location>
        <begin position="519"/>
        <end position="538"/>
    </location>
</feature>
<feature type="domain" description="UIM 3" evidence="2">
    <location>
        <begin position="549"/>
        <end position="568"/>
    </location>
</feature>
<feature type="domain" description="UIM 4" evidence="2">
    <location>
        <begin position="574"/>
        <end position="590"/>
    </location>
</feature>
<feature type="modified residue" description="Phosphoserine" evidence="1">
    <location>
        <position position="205"/>
    </location>
</feature>
<feature type="modified residue" description="Phosphoserine" evidence="5">
    <location>
        <position position="586"/>
    </location>
</feature>
<feature type="sequence variant" id="VAR_048276" description="In dbSNP:rs2287174.">
    <original>L</original>
    <variation>P</variation>
    <location>
        <position position="505"/>
    </location>
</feature>
<feature type="mutagenesis site" description="No effect on 'Lys-63'-linked ubiquitin binding and interaction with EGFR. No effect on 'Lys-63'-linked ubiquitin binding and interaction with EGFR; when associated with 527-G--A-531. Inhibits 'Lys-63'-linked ubiquitin binding; when associated with 527-G--A-531 and 557-G--A-561. Abolishes 'Lys-63'-linked ubiquitin binding and interaction with EGFR; when associated with 527-G--A-531, 557-G--A-561 and 582-G--A-586." evidence="3">
    <original>AIQQS</original>
    <variation>GIQQA</variation>
    <location>
        <begin position="491"/>
        <end position="495"/>
    </location>
</feature>
<feature type="mutagenesis site" description="No effect on 'Lys-63'-linked ubiquitin binding and interaction with EGFR. No effect on 'Lys-63'-linked ubiquitin binding and interaction with EGFR; when associated with 491-G--A-495. Inhibits 'Lys-63'-linked ubiquitin binding; when associated with 557-G--A-561. Inhibits 'Lys-63'-linked ubiquitin binding; when associated with 491-G--A-495 and 557-G--A-561. Strongly inhibits 'Lys-63'-linked ubiquitin binding; when associated with 557-G--A-561 and 582-G--A-586. Abolishes 'Lys-63'-linked ubiquitin binding and interaction with EGFR; when associated with 491-G--A-495, 557-G--A-561 and 582-G--A-586." evidence="3">
    <original>AIQES</original>
    <variation>GIQEA</variation>
    <location>
        <begin position="527"/>
        <end position="531"/>
    </location>
</feature>
<feature type="mutagenesis site" description="Slightly inhibits 'Lys-63'-linked ubiquitin binding and strongly inhibits interaction with EGFR. No effect on 'Lys-63'-linked ubiquitin binding and interaction with EGFR; when associated with 527-G--A-531. Inhibits 'Lys-63'-linked ubiquitin binding and interaction with EGFR; when associated with 491-G--A-495 and 527-G--A-531. Abolishes 'Lys-63'-linked ubiquitin binding and interaction with EGFR; when associated with 582-V--S-586. Abolishes 'Lys-63'-linked ubiquitin binding and interaction with EGFR; when associated with 491-G--A-495, 527-G--A-531 and 582-G--A-586." evidence="3">
    <original>AMELS</original>
    <variation>GMELA</variation>
    <location>
        <begin position="557"/>
        <end position="561"/>
    </location>
</feature>
<feature type="mutagenesis site" description="Abolishes 'Lys-63'-linked ubiquitin binding and strongly inhibits interaction with EGFR. Abolishes 'Lys-63'-linked ubiquitin binding and interaction with EGFR; when associated with 557-G--A-561. Strongly inhibits 'Lys-63'-linked ubiquitin binding; when associated with 527-G--A-531 and 557-G--A-561. Abolishes 'Lys-63'-linked ubiquitin binding and interaction with EGFR; when associated with 491-G--A-495, 527-G--A-531 and 557-G--A-561." evidence="3">
    <original>VLQLS</original>
    <variation>GLQLA</variation>
    <location>
        <begin position="582"/>
        <end position="586"/>
    </location>
</feature>
<feature type="sequence conflict" description="In Ref. 2; AAC17109." evidence="4" ref="2">
    <original>D</original>
    <variation>G</variation>
    <location>
        <position position="193"/>
    </location>
</feature>
<feature type="sequence conflict" description="In Ref. 1; AAH32833." evidence="4" ref="1">
    <original>D</original>
    <variation>G</variation>
    <location>
        <position position="296"/>
    </location>
</feature>
<dbReference type="EMBL" id="BC032833">
    <property type="protein sequence ID" value="AAH32833.2"/>
    <property type="molecule type" value="mRNA"/>
</dbReference>
<dbReference type="EMBL" id="AF064604">
    <property type="protein sequence ID" value="AAC17109.1"/>
    <property type="status" value="ALT_FRAME"/>
    <property type="molecule type" value="mRNA"/>
</dbReference>
<dbReference type="CCDS" id="CCDS9140.1"/>
<dbReference type="RefSeq" id="NP_149112.1">
    <property type="nucleotide sequence ID" value="NM_033121.2"/>
</dbReference>
<dbReference type="SMR" id="Q8IZ07"/>
<dbReference type="BioGRID" id="124582">
    <property type="interactions" value="163"/>
</dbReference>
<dbReference type="FunCoup" id="Q8IZ07">
    <property type="interactions" value="1940"/>
</dbReference>
<dbReference type="IntAct" id="Q8IZ07">
    <property type="interactions" value="97"/>
</dbReference>
<dbReference type="MINT" id="Q8IZ07"/>
<dbReference type="STRING" id="9606.ENSP00000261739"/>
<dbReference type="iPTMnet" id="Q8IZ07"/>
<dbReference type="MetOSite" id="Q8IZ07"/>
<dbReference type="PhosphoSitePlus" id="Q8IZ07"/>
<dbReference type="BioMuta" id="ANKRD13A"/>
<dbReference type="DMDM" id="145559439"/>
<dbReference type="jPOST" id="Q8IZ07"/>
<dbReference type="MassIVE" id="Q8IZ07"/>
<dbReference type="PaxDb" id="9606-ENSP00000261739"/>
<dbReference type="PeptideAtlas" id="Q8IZ07"/>
<dbReference type="ProteomicsDB" id="71265"/>
<dbReference type="Pumba" id="Q8IZ07"/>
<dbReference type="Antibodypedia" id="49620">
    <property type="antibodies" value="80 antibodies from 17 providers"/>
</dbReference>
<dbReference type="DNASU" id="88455"/>
<dbReference type="Ensembl" id="ENST00000261739.9">
    <property type="protein sequence ID" value="ENSP00000261739.4"/>
    <property type="gene ID" value="ENSG00000076513.17"/>
</dbReference>
<dbReference type="GeneID" id="88455"/>
<dbReference type="KEGG" id="hsa:88455"/>
<dbReference type="MANE-Select" id="ENST00000261739.9">
    <property type="protein sequence ID" value="ENSP00000261739.4"/>
    <property type="RefSeq nucleotide sequence ID" value="NM_033121.2"/>
    <property type="RefSeq protein sequence ID" value="NP_149112.1"/>
</dbReference>
<dbReference type="UCSC" id="uc001tpx.4">
    <property type="organism name" value="human"/>
</dbReference>
<dbReference type="AGR" id="HGNC:21268"/>
<dbReference type="CTD" id="88455"/>
<dbReference type="DisGeNET" id="88455"/>
<dbReference type="GeneCards" id="ANKRD13A"/>
<dbReference type="HGNC" id="HGNC:21268">
    <property type="gene designation" value="ANKRD13A"/>
</dbReference>
<dbReference type="HPA" id="ENSG00000076513">
    <property type="expression patterns" value="Low tissue specificity"/>
</dbReference>
<dbReference type="MIM" id="615123">
    <property type="type" value="gene"/>
</dbReference>
<dbReference type="neXtProt" id="NX_Q8IZ07"/>
<dbReference type="OpenTargets" id="ENSG00000076513"/>
<dbReference type="PharmGKB" id="PA134884324"/>
<dbReference type="VEuPathDB" id="HostDB:ENSG00000076513"/>
<dbReference type="eggNOG" id="KOG0522">
    <property type="taxonomic scope" value="Eukaryota"/>
</dbReference>
<dbReference type="GeneTree" id="ENSGT00950000182928"/>
<dbReference type="HOGENOM" id="CLU_026137_2_0_1"/>
<dbReference type="InParanoid" id="Q8IZ07"/>
<dbReference type="OMA" id="CHENGLG"/>
<dbReference type="OrthoDB" id="1585644at2759"/>
<dbReference type="PAN-GO" id="Q8IZ07">
    <property type="GO annotations" value="1 GO annotation based on evolutionary models"/>
</dbReference>
<dbReference type="PhylomeDB" id="Q8IZ07"/>
<dbReference type="TreeFam" id="TF314176"/>
<dbReference type="PathwayCommons" id="Q8IZ07"/>
<dbReference type="SignaLink" id="Q8IZ07"/>
<dbReference type="SIGNOR" id="Q8IZ07"/>
<dbReference type="BioGRID-ORCS" id="88455">
    <property type="hits" value="7 hits in 1151 CRISPR screens"/>
</dbReference>
<dbReference type="ChiTaRS" id="ANKRD13A">
    <property type="organism name" value="human"/>
</dbReference>
<dbReference type="GenomeRNAi" id="88455"/>
<dbReference type="Pharos" id="Q8IZ07">
    <property type="development level" value="Tbio"/>
</dbReference>
<dbReference type="PRO" id="PR:Q8IZ07"/>
<dbReference type="Proteomes" id="UP000005640">
    <property type="component" value="Chromosome 12"/>
</dbReference>
<dbReference type="RNAct" id="Q8IZ07">
    <property type="molecule type" value="protein"/>
</dbReference>
<dbReference type="Bgee" id="ENSG00000076513">
    <property type="expression patterns" value="Expressed in upper arm skin and 191 other cell types or tissues"/>
</dbReference>
<dbReference type="ExpressionAtlas" id="Q8IZ07">
    <property type="expression patterns" value="baseline and differential"/>
</dbReference>
<dbReference type="GO" id="GO:0005737">
    <property type="term" value="C:cytoplasm"/>
    <property type="evidence" value="ECO:0000314"/>
    <property type="project" value="UniProtKB"/>
</dbReference>
<dbReference type="GO" id="GO:0005770">
    <property type="term" value="C:late endosome"/>
    <property type="evidence" value="ECO:0000314"/>
    <property type="project" value="UniProtKB"/>
</dbReference>
<dbReference type="GO" id="GO:0048471">
    <property type="term" value="C:perinuclear region of cytoplasm"/>
    <property type="evidence" value="ECO:0000314"/>
    <property type="project" value="UniProtKB"/>
</dbReference>
<dbReference type="GO" id="GO:0005886">
    <property type="term" value="C:plasma membrane"/>
    <property type="evidence" value="ECO:0000314"/>
    <property type="project" value="UniProtKB"/>
</dbReference>
<dbReference type="GO" id="GO:0140036">
    <property type="term" value="F:ubiquitin-modified protein reader activity"/>
    <property type="evidence" value="ECO:0000314"/>
    <property type="project" value="UniProtKB"/>
</dbReference>
<dbReference type="GO" id="GO:1905667">
    <property type="term" value="P:negative regulation of protein localization to endosome"/>
    <property type="evidence" value="ECO:0000314"/>
    <property type="project" value="UniProtKB"/>
</dbReference>
<dbReference type="GO" id="GO:0002091">
    <property type="term" value="P:negative regulation of receptor internalization"/>
    <property type="evidence" value="ECO:0000315"/>
    <property type="project" value="UniProtKB"/>
</dbReference>
<dbReference type="FunFam" id="1.25.40.20:FF:000057">
    <property type="entry name" value="Ankyrin repeat domain-containing protein 13B"/>
    <property type="match status" value="1"/>
</dbReference>
<dbReference type="Gene3D" id="1.25.40.20">
    <property type="entry name" value="Ankyrin repeat-containing domain"/>
    <property type="match status" value="1"/>
</dbReference>
<dbReference type="InterPro" id="IPR021832">
    <property type="entry name" value="ANKRD13"/>
</dbReference>
<dbReference type="InterPro" id="IPR055285">
    <property type="entry name" value="ANKRD13_C"/>
</dbReference>
<dbReference type="InterPro" id="IPR002110">
    <property type="entry name" value="Ankyrin_rpt"/>
</dbReference>
<dbReference type="InterPro" id="IPR036770">
    <property type="entry name" value="Ankyrin_rpt-contain_sf"/>
</dbReference>
<dbReference type="InterPro" id="IPR003903">
    <property type="entry name" value="UIM_dom"/>
</dbReference>
<dbReference type="PANTHER" id="PTHR12447">
    <property type="entry name" value="ANKYRIN REPEAT DOMAIN-CONTAINING PROTEIN 13"/>
    <property type="match status" value="1"/>
</dbReference>
<dbReference type="PANTHER" id="PTHR12447:SF4">
    <property type="entry name" value="ANKYRIN REPEAT DOMAIN-CONTAINING PROTEIN 13A"/>
    <property type="match status" value="1"/>
</dbReference>
<dbReference type="Pfam" id="PF12796">
    <property type="entry name" value="Ank_2"/>
    <property type="match status" value="1"/>
</dbReference>
<dbReference type="Pfam" id="PF11904">
    <property type="entry name" value="ANKRD13_C"/>
    <property type="match status" value="1"/>
</dbReference>
<dbReference type="SMART" id="SM00248">
    <property type="entry name" value="ANK"/>
    <property type="match status" value="2"/>
</dbReference>
<dbReference type="SMART" id="SM00726">
    <property type="entry name" value="UIM"/>
    <property type="match status" value="3"/>
</dbReference>
<dbReference type="SUPFAM" id="SSF48403">
    <property type="entry name" value="Ankyrin repeat"/>
    <property type="match status" value="1"/>
</dbReference>
<dbReference type="PROSITE" id="PS50297">
    <property type="entry name" value="ANK_REP_REGION"/>
    <property type="match status" value="1"/>
</dbReference>
<dbReference type="PROSITE" id="PS50088">
    <property type="entry name" value="ANK_REPEAT"/>
    <property type="match status" value="1"/>
</dbReference>
<dbReference type="PROSITE" id="PS50330">
    <property type="entry name" value="UIM"/>
    <property type="match status" value="3"/>
</dbReference>